<proteinExistence type="predicted"/>
<feature type="chain" id="PRO_0000116795" description="Uncharacterized protein P27G11.16">
    <location>
        <begin position="1"/>
        <end position="104"/>
    </location>
</feature>
<organism>
    <name type="scientific">Schizosaccharomyces pombe (strain 972 / ATCC 24843)</name>
    <name type="common">Fission yeast</name>
    <dbReference type="NCBI Taxonomy" id="284812"/>
    <lineage>
        <taxon>Eukaryota</taxon>
        <taxon>Fungi</taxon>
        <taxon>Dikarya</taxon>
        <taxon>Ascomycota</taxon>
        <taxon>Taphrinomycotina</taxon>
        <taxon>Schizosaccharomycetes</taxon>
        <taxon>Schizosaccharomycetales</taxon>
        <taxon>Schizosaccharomycetaceae</taxon>
        <taxon>Schizosaccharomyces</taxon>
    </lineage>
</organism>
<name>YIOG_SCHPO</name>
<accession>Q9C109</accession>
<reference key="1">
    <citation type="journal article" date="2002" name="Nature">
        <title>The genome sequence of Schizosaccharomyces pombe.</title>
        <authorList>
            <person name="Wood V."/>
            <person name="Gwilliam R."/>
            <person name="Rajandream M.A."/>
            <person name="Lyne M.H."/>
            <person name="Lyne R."/>
            <person name="Stewart A."/>
            <person name="Sgouros J.G."/>
            <person name="Peat N."/>
            <person name="Hayles J."/>
            <person name="Baker S.G."/>
            <person name="Basham D."/>
            <person name="Bowman S."/>
            <person name="Brooks K."/>
            <person name="Brown D."/>
            <person name="Brown S."/>
            <person name="Chillingworth T."/>
            <person name="Churcher C.M."/>
            <person name="Collins M."/>
            <person name="Connor R."/>
            <person name="Cronin A."/>
            <person name="Davis P."/>
            <person name="Feltwell T."/>
            <person name="Fraser A."/>
            <person name="Gentles S."/>
            <person name="Goble A."/>
            <person name="Hamlin N."/>
            <person name="Harris D.E."/>
            <person name="Hidalgo J."/>
            <person name="Hodgson G."/>
            <person name="Holroyd S."/>
            <person name="Hornsby T."/>
            <person name="Howarth S."/>
            <person name="Huckle E.J."/>
            <person name="Hunt S."/>
            <person name="Jagels K."/>
            <person name="James K.D."/>
            <person name="Jones L."/>
            <person name="Jones M."/>
            <person name="Leather S."/>
            <person name="McDonald S."/>
            <person name="McLean J."/>
            <person name="Mooney P."/>
            <person name="Moule S."/>
            <person name="Mungall K.L."/>
            <person name="Murphy L.D."/>
            <person name="Niblett D."/>
            <person name="Odell C."/>
            <person name="Oliver K."/>
            <person name="O'Neil S."/>
            <person name="Pearson D."/>
            <person name="Quail M.A."/>
            <person name="Rabbinowitsch E."/>
            <person name="Rutherford K.M."/>
            <person name="Rutter S."/>
            <person name="Saunders D."/>
            <person name="Seeger K."/>
            <person name="Sharp S."/>
            <person name="Skelton J."/>
            <person name="Simmonds M.N."/>
            <person name="Squares R."/>
            <person name="Squares S."/>
            <person name="Stevens K."/>
            <person name="Taylor K."/>
            <person name="Taylor R.G."/>
            <person name="Tivey A."/>
            <person name="Walsh S.V."/>
            <person name="Warren T."/>
            <person name="Whitehead S."/>
            <person name="Woodward J.R."/>
            <person name="Volckaert G."/>
            <person name="Aert R."/>
            <person name="Robben J."/>
            <person name="Grymonprez B."/>
            <person name="Weltjens I."/>
            <person name="Vanstreels E."/>
            <person name="Rieger M."/>
            <person name="Schaefer M."/>
            <person name="Mueller-Auer S."/>
            <person name="Gabel C."/>
            <person name="Fuchs M."/>
            <person name="Duesterhoeft A."/>
            <person name="Fritzc C."/>
            <person name="Holzer E."/>
            <person name="Moestl D."/>
            <person name="Hilbert H."/>
            <person name="Borzym K."/>
            <person name="Langer I."/>
            <person name="Beck A."/>
            <person name="Lehrach H."/>
            <person name="Reinhardt R."/>
            <person name="Pohl T.M."/>
            <person name="Eger P."/>
            <person name="Zimmermann W."/>
            <person name="Wedler H."/>
            <person name="Wambutt R."/>
            <person name="Purnelle B."/>
            <person name="Goffeau A."/>
            <person name="Cadieu E."/>
            <person name="Dreano S."/>
            <person name="Gloux S."/>
            <person name="Lelaure V."/>
            <person name="Mottier S."/>
            <person name="Galibert F."/>
            <person name="Aves S.J."/>
            <person name="Xiang Z."/>
            <person name="Hunt C."/>
            <person name="Moore K."/>
            <person name="Hurst S.M."/>
            <person name="Lucas M."/>
            <person name="Rochet M."/>
            <person name="Gaillardin C."/>
            <person name="Tallada V.A."/>
            <person name="Garzon A."/>
            <person name="Thode G."/>
            <person name="Daga R.R."/>
            <person name="Cruzado L."/>
            <person name="Jimenez J."/>
            <person name="Sanchez M."/>
            <person name="del Rey F."/>
            <person name="Benito J."/>
            <person name="Dominguez A."/>
            <person name="Revuelta J.L."/>
            <person name="Moreno S."/>
            <person name="Armstrong J."/>
            <person name="Forsburg S.L."/>
            <person name="Cerutti L."/>
            <person name="Lowe T."/>
            <person name="McCombie W.R."/>
            <person name="Paulsen I."/>
            <person name="Potashkin J."/>
            <person name="Shpakovski G.V."/>
            <person name="Ussery D."/>
            <person name="Barrell B.G."/>
            <person name="Nurse P."/>
        </authorList>
    </citation>
    <scope>NUCLEOTIDE SEQUENCE [LARGE SCALE GENOMIC DNA]</scope>
    <source>
        <strain>972 / ATCC 24843</strain>
    </source>
</reference>
<dbReference type="EMBL" id="CU329670">
    <property type="protein sequence ID" value="CAC34992.1"/>
    <property type="molecule type" value="Genomic_DNA"/>
</dbReference>
<dbReference type="RefSeq" id="NP_593416.1">
    <property type="nucleotide sequence ID" value="NM_001018849.1"/>
</dbReference>
<dbReference type="BioGRID" id="278161">
    <property type="interactions" value="2"/>
</dbReference>
<dbReference type="PaxDb" id="4896-SPAP27G11.16.1"/>
<dbReference type="EnsemblFungi" id="SPAP27G11.16.1">
    <property type="protein sequence ID" value="SPAP27G11.16.1:pep"/>
    <property type="gene ID" value="SPAP27G11.16"/>
</dbReference>
<dbReference type="KEGG" id="spo:2541665"/>
<dbReference type="PomBase" id="SPAP27G11.16"/>
<dbReference type="VEuPathDB" id="FungiDB:SPAP27G11.16"/>
<dbReference type="HOGENOM" id="CLU_2251625_0_0_1"/>
<dbReference type="InParanoid" id="Q9C109"/>
<dbReference type="PRO" id="PR:Q9C109"/>
<dbReference type="Proteomes" id="UP000002485">
    <property type="component" value="Chromosome I"/>
</dbReference>
<gene>
    <name type="ORF">SPAP27G11.16</name>
</gene>
<protein>
    <recommendedName>
        <fullName>Uncharacterized protein P27G11.16</fullName>
    </recommendedName>
</protein>
<sequence length="104" mass="11954">MGSCLRFFKQGAILHENNTNFTERSSSVFFECNPCYSIEKLKSNRILIAVRLFSFAFSSFSTTLRILRDFIIAASKCEFEKIWSTTFSISFLSFNFKSSESPSL</sequence>
<keyword id="KW-1185">Reference proteome</keyword>